<organism>
    <name type="scientific">Canis lupus familiaris</name>
    <name type="common">Dog</name>
    <name type="synonym">Canis familiaris</name>
    <dbReference type="NCBI Taxonomy" id="9615"/>
    <lineage>
        <taxon>Eukaryota</taxon>
        <taxon>Metazoa</taxon>
        <taxon>Chordata</taxon>
        <taxon>Craniata</taxon>
        <taxon>Vertebrata</taxon>
        <taxon>Euteleostomi</taxon>
        <taxon>Mammalia</taxon>
        <taxon>Eutheria</taxon>
        <taxon>Laurasiatheria</taxon>
        <taxon>Carnivora</taxon>
        <taxon>Caniformia</taxon>
        <taxon>Canidae</taxon>
        <taxon>Canis</taxon>
    </lineage>
</organism>
<comment type="function">
    <text evidence="1">Receptor for relaxin. The activity of this receptor is mediated by G proteins leading to stimulation of adenylate cyclase and an increase of cAMP. May also be a receptor for Leydig insulin-like peptide (INSL3) (By similarity).</text>
</comment>
<comment type="subcellular location">
    <subcellularLocation>
        <location>Cell membrane</location>
        <topology>Multi-pass membrane protein</topology>
    </subcellularLocation>
</comment>
<comment type="similarity">
    <text evidence="4">Belongs to the G-protein coupled receptor 1 family.</text>
</comment>
<proteinExistence type="evidence at transcript level"/>
<gene>
    <name type="primary">RXFP2</name>
    <name type="synonym">LGR8</name>
</gene>
<protein>
    <recommendedName>
        <fullName>Relaxin receptor 2</fullName>
    </recommendedName>
    <alternativeName>
        <fullName>INSL3 receptor</fullName>
    </alternativeName>
    <alternativeName>
        <fullName>Leucine-rich repeat-containing G-protein coupled receptor 8</fullName>
    </alternativeName>
    <alternativeName>
        <fullName>Relaxin family peptide receptor 2</fullName>
    </alternativeName>
</protein>
<accession>Q5XM32</accession>
<name>RXFP2_CANLF</name>
<evidence type="ECO:0000250" key="1"/>
<evidence type="ECO:0000255" key="2"/>
<evidence type="ECO:0000255" key="3">
    <source>
        <dbReference type="PROSITE-ProRule" id="PRU00124"/>
    </source>
</evidence>
<evidence type="ECO:0000255" key="4">
    <source>
        <dbReference type="PROSITE-ProRule" id="PRU00521"/>
    </source>
</evidence>
<sequence>MFPLLHFIVLIDVKDFPLTEGSTITPLCQKGYFPCGNLTKCLPRAFHCDGVDDCGNGADEDNCGDTSGWATIFGTVHGNANNVALTQECFLNQYPQPCDCKGTELECINADLRAVPVISSNTTLLSLKKNKIHSLPDKVFTKYTQLKQIFLQHNCITHISRKAFFGLHNLQILYLSHNCITTLRPGVFKDLHQLTWLILDDNPITRISQQLFTGLKSLFFLSMVNNYLEALPKQMCAQMPQLNWMDLEGNGIKYLTNSSFLSCNSLTVLFLPRNQIDFVPEKTFSSLKNLGELDLSSNMIMELPPEIFKDLKLLQKLNLSSNPLLYLHKNQFESLKQLQSLDLERIEIPNINTRMFQPMMNLSHIYFKNFRYCSYAPHVRICMPLTDGISSFEDLLANNILRIFVWVIAFITCFGNLFVIGMRSFIKAENTTHATSIKILCCADCLMGVYLFFIGFFDIKYRGQYQKYALLWMESLQCRLMGFLAMLSTEVSVLLLTYLTLEKFLAIVFPFSNIRPGKWQTMVILICIWIVGFLIAVIPFWKEDYFGNFYGKNGVCFPLYYDQTEDIGSKGYSLGIFLGVNLLAFLIIVFSYTIMFCSIKKTALQTSEVRNPIGREVAVANRFFFIVFSDAICWIPVFVIKILSLFRVEIPGTITSWIVIFFLPVNSALNPILYTLTTSFFKDKLKQLLHKHRRKSIFKTKKKSLSTSIVWTDDSSSLKLGVLNKITLGDSIVKPIS</sequence>
<keyword id="KW-1003">Cell membrane</keyword>
<keyword id="KW-1015">Disulfide bond</keyword>
<keyword id="KW-0297">G-protein coupled receptor</keyword>
<keyword id="KW-0325">Glycoprotein</keyword>
<keyword id="KW-0433">Leucine-rich repeat</keyword>
<keyword id="KW-0472">Membrane</keyword>
<keyword id="KW-0675">Receptor</keyword>
<keyword id="KW-1185">Reference proteome</keyword>
<keyword id="KW-0677">Repeat</keyword>
<keyword id="KW-0807">Transducer</keyword>
<keyword id="KW-0812">Transmembrane</keyword>
<keyword id="KW-1133">Transmembrane helix</keyword>
<dbReference type="EMBL" id="AY749634">
    <property type="protein sequence ID" value="AAU95071.1"/>
    <property type="molecule type" value="mRNA"/>
</dbReference>
<dbReference type="RefSeq" id="NP_001005870.1">
    <property type="nucleotide sequence ID" value="NM_001005870.1"/>
</dbReference>
<dbReference type="SMR" id="Q5XM32"/>
<dbReference type="FunCoup" id="Q5XM32">
    <property type="interactions" value="46"/>
</dbReference>
<dbReference type="STRING" id="9615.ENSCAFP00000044878"/>
<dbReference type="GlyCosmos" id="Q5XM32">
    <property type="glycosylation" value="5 sites, No reported glycans"/>
</dbReference>
<dbReference type="PaxDb" id="9612-ENSCAFP00000009735"/>
<dbReference type="Ensembl" id="ENSCAFT00000010501.6">
    <property type="protein sequence ID" value="ENSCAFP00000009735.5"/>
    <property type="gene ID" value="ENSCAFG00000006501.6"/>
</dbReference>
<dbReference type="Ensembl" id="ENSCAFT00845035419.1">
    <property type="protein sequence ID" value="ENSCAFP00845027726.1"/>
    <property type="gene ID" value="ENSCAFG00845019902.1"/>
</dbReference>
<dbReference type="GeneID" id="450220"/>
<dbReference type="KEGG" id="cfa:450220"/>
<dbReference type="CTD" id="122042"/>
<dbReference type="VEuPathDB" id="HostDB:ENSCAFG00845019902"/>
<dbReference type="VGNC" id="VGNC:54989">
    <property type="gene designation" value="RXFP2"/>
</dbReference>
<dbReference type="eggNOG" id="KOG0619">
    <property type="taxonomic scope" value="Eukaryota"/>
</dbReference>
<dbReference type="eggNOG" id="KOG2087">
    <property type="taxonomic scope" value="Eukaryota"/>
</dbReference>
<dbReference type="GeneTree" id="ENSGT00940000158948"/>
<dbReference type="InParanoid" id="Q5XM32"/>
<dbReference type="OrthoDB" id="6022531at2759"/>
<dbReference type="Reactome" id="R-CFA-444821">
    <property type="pathway name" value="Relaxin receptors"/>
</dbReference>
<dbReference type="Proteomes" id="UP000002254">
    <property type="component" value="Chromosome 25"/>
</dbReference>
<dbReference type="Proteomes" id="UP000694429">
    <property type="component" value="Unplaced"/>
</dbReference>
<dbReference type="Proteomes" id="UP000694542">
    <property type="component" value="Unplaced"/>
</dbReference>
<dbReference type="Proteomes" id="UP000805418">
    <property type="component" value="Chromosome 25"/>
</dbReference>
<dbReference type="Bgee" id="ENSCAFG00000006501">
    <property type="expression patterns" value="Expressed in thymus and 3 other cell types or tissues"/>
</dbReference>
<dbReference type="GO" id="GO:0005886">
    <property type="term" value="C:plasma membrane"/>
    <property type="evidence" value="ECO:0000318"/>
    <property type="project" value="GO_Central"/>
</dbReference>
<dbReference type="GO" id="GO:0008528">
    <property type="term" value="F:G protein-coupled peptide receptor activity"/>
    <property type="evidence" value="ECO:0000318"/>
    <property type="project" value="GO_Central"/>
</dbReference>
<dbReference type="GO" id="GO:0016500">
    <property type="term" value="F:protein-hormone receptor activity"/>
    <property type="evidence" value="ECO:0007669"/>
    <property type="project" value="Ensembl"/>
</dbReference>
<dbReference type="GO" id="GO:0007189">
    <property type="term" value="P:adenylate cyclase-activating G protein-coupled receptor signaling pathway"/>
    <property type="evidence" value="ECO:0000318"/>
    <property type="project" value="GO_Central"/>
</dbReference>
<dbReference type="GO" id="GO:0009755">
    <property type="term" value="P:hormone-mediated signaling pathway"/>
    <property type="evidence" value="ECO:0000318"/>
    <property type="project" value="GO_Central"/>
</dbReference>
<dbReference type="GO" id="GO:0008584">
    <property type="term" value="P:male gonad development"/>
    <property type="evidence" value="ECO:0007669"/>
    <property type="project" value="Ensembl"/>
</dbReference>
<dbReference type="CDD" id="cd00112">
    <property type="entry name" value="LDLa"/>
    <property type="match status" value="1"/>
</dbReference>
<dbReference type="FunFam" id="1.20.1070.10:FF:000023">
    <property type="entry name" value="Relaxin family peptide receptor 1"/>
    <property type="match status" value="1"/>
</dbReference>
<dbReference type="FunFam" id="4.10.400.10:FF:000014">
    <property type="entry name" value="Relaxin family peptide receptor 1"/>
    <property type="match status" value="1"/>
</dbReference>
<dbReference type="FunFam" id="3.80.10.10:FF:000207">
    <property type="entry name" value="Relaxin family peptide receptor 2"/>
    <property type="match status" value="1"/>
</dbReference>
<dbReference type="FunFam" id="3.80.10.10:FF:000300">
    <property type="entry name" value="Relaxin family peptide receptor 2"/>
    <property type="match status" value="1"/>
</dbReference>
<dbReference type="Gene3D" id="4.10.400.10">
    <property type="entry name" value="Low-density Lipoprotein Receptor"/>
    <property type="match status" value="1"/>
</dbReference>
<dbReference type="Gene3D" id="1.20.1070.10">
    <property type="entry name" value="Rhodopsin 7-helix transmembrane proteins"/>
    <property type="match status" value="1"/>
</dbReference>
<dbReference type="Gene3D" id="3.80.10.10">
    <property type="entry name" value="Ribonuclease Inhibitor"/>
    <property type="match status" value="2"/>
</dbReference>
<dbReference type="InterPro" id="IPR000276">
    <property type="entry name" value="GPCR_Rhodpsn"/>
</dbReference>
<dbReference type="InterPro" id="IPR017452">
    <property type="entry name" value="GPCR_Rhodpsn_7TM"/>
</dbReference>
<dbReference type="InterPro" id="IPR036055">
    <property type="entry name" value="LDL_receptor-like_sf"/>
</dbReference>
<dbReference type="InterPro" id="IPR023415">
    <property type="entry name" value="LDLR_class-A_CS"/>
</dbReference>
<dbReference type="InterPro" id="IPR002172">
    <property type="entry name" value="LDrepeatLR_classA_rpt"/>
</dbReference>
<dbReference type="InterPro" id="IPR001611">
    <property type="entry name" value="Leu-rich_rpt"/>
</dbReference>
<dbReference type="InterPro" id="IPR003591">
    <property type="entry name" value="Leu-rich_rpt_typical-subtyp"/>
</dbReference>
<dbReference type="InterPro" id="IPR032675">
    <property type="entry name" value="LRR_dom_sf"/>
</dbReference>
<dbReference type="InterPro" id="IPR008112">
    <property type="entry name" value="Relaxin_rcpt"/>
</dbReference>
<dbReference type="PANTHER" id="PTHR24372">
    <property type="entry name" value="GLYCOPROTEIN HORMONE RECEPTOR"/>
    <property type="match status" value="1"/>
</dbReference>
<dbReference type="PANTHER" id="PTHR24372:SF72">
    <property type="entry name" value="RELAXIN RECEPTOR 2"/>
    <property type="match status" value="1"/>
</dbReference>
<dbReference type="Pfam" id="PF00001">
    <property type="entry name" value="7tm_1"/>
    <property type="match status" value="1"/>
</dbReference>
<dbReference type="Pfam" id="PF00057">
    <property type="entry name" value="Ldl_recept_a"/>
    <property type="match status" value="1"/>
</dbReference>
<dbReference type="Pfam" id="PF13855">
    <property type="entry name" value="LRR_8"/>
    <property type="match status" value="3"/>
</dbReference>
<dbReference type="PRINTS" id="PR00237">
    <property type="entry name" value="GPCRRHODOPSN"/>
</dbReference>
<dbReference type="PRINTS" id="PR01739">
    <property type="entry name" value="RELAXINR"/>
</dbReference>
<dbReference type="SMART" id="SM00192">
    <property type="entry name" value="LDLa"/>
    <property type="match status" value="1"/>
</dbReference>
<dbReference type="SMART" id="SM00369">
    <property type="entry name" value="LRR_TYP"/>
    <property type="match status" value="10"/>
</dbReference>
<dbReference type="SUPFAM" id="SSF81321">
    <property type="entry name" value="Family A G protein-coupled receptor-like"/>
    <property type="match status" value="1"/>
</dbReference>
<dbReference type="SUPFAM" id="SSF52058">
    <property type="entry name" value="L domain-like"/>
    <property type="match status" value="1"/>
</dbReference>
<dbReference type="SUPFAM" id="SSF57424">
    <property type="entry name" value="LDL receptor-like module"/>
    <property type="match status" value="1"/>
</dbReference>
<dbReference type="PROSITE" id="PS50262">
    <property type="entry name" value="G_PROTEIN_RECEP_F1_2"/>
    <property type="match status" value="1"/>
</dbReference>
<dbReference type="PROSITE" id="PS01209">
    <property type="entry name" value="LDLRA_1"/>
    <property type="match status" value="1"/>
</dbReference>
<dbReference type="PROSITE" id="PS50068">
    <property type="entry name" value="LDLRA_2"/>
    <property type="match status" value="1"/>
</dbReference>
<dbReference type="PROSITE" id="PS51450">
    <property type="entry name" value="LRR"/>
    <property type="match status" value="9"/>
</dbReference>
<feature type="chain" id="PRO_0000069701" description="Relaxin receptor 2">
    <location>
        <begin position="1"/>
        <end position="737"/>
    </location>
</feature>
<feature type="topological domain" description="Extracellular" evidence="2">
    <location>
        <begin position="1"/>
        <end position="399"/>
    </location>
</feature>
<feature type="transmembrane region" description="Helical; Name=1" evidence="2">
    <location>
        <begin position="400"/>
        <end position="420"/>
    </location>
</feature>
<feature type="topological domain" description="Cytoplasmic" evidence="2">
    <location>
        <begin position="421"/>
        <end position="438"/>
    </location>
</feature>
<feature type="transmembrane region" description="Helical; Name=2" evidence="2">
    <location>
        <begin position="439"/>
        <end position="459"/>
    </location>
</feature>
<feature type="topological domain" description="Extracellular" evidence="2">
    <location>
        <begin position="460"/>
        <end position="478"/>
    </location>
</feature>
<feature type="transmembrane region" description="Helical; Name=3" evidence="2">
    <location>
        <begin position="479"/>
        <end position="501"/>
    </location>
</feature>
<feature type="topological domain" description="Cytoplasmic" evidence="2">
    <location>
        <begin position="502"/>
        <end position="520"/>
    </location>
</feature>
<feature type="transmembrane region" description="Helical; Name=4" evidence="2">
    <location>
        <begin position="521"/>
        <end position="541"/>
    </location>
</feature>
<feature type="topological domain" description="Extracellular" evidence="2">
    <location>
        <begin position="542"/>
        <end position="575"/>
    </location>
</feature>
<feature type="transmembrane region" description="Helical; Name=5" evidence="2">
    <location>
        <begin position="576"/>
        <end position="596"/>
    </location>
</feature>
<feature type="topological domain" description="Cytoplasmic" evidence="2">
    <location>
        <begin position="597"/>
        <end position="622"/>
    </location>
</feature>
<feature type="transmembrane region" description="Helical; Name=6" evidence="2">
    <location>
        <begin position="623"/>
        <end position="643"/>
    </location>
</feature>
<feature type="topological domain" description="Extracellular" evidence="2">
    <location>
        <begin position="644"/>
        <end position="653"/>
    </location>
</feature>
<feature type="transmembrane region" description="Helical; Name=7" evidence="2">
    <location>
        <begin position="654"/>
        <end position="674"/>
    </location>
</feature>
<feature type="topological domain" description="Cytoplasmic" evidence="2">
    <location>
        <begin position="675"/>
        <end position="737"/>
    </location>
</feature>
<feature type="domain" description="LDL-receptor class A" evidence="3">
    <location>
        <begin position="27"/>
        <end position="64"/>
    </location>
</feature>
<feature type="repeat" description="LRR 1">
    <location>
        <begin position="121"/>
        <end position="142"/>
    </location>
</feature>
<feature type="repeat" description="LRR 2">
    <location>
        <begin position="145"/>
        <end position="166"/>
    </location>
</feature>
<feature type="repeat" description="LRR 3">
    <location>
        <begin position="169"/>
        <end position="190"/>
    </location>
</feature>
<feature type="repeat" description="LRR 4">
    <location>
        <begin position="193"/>
        <end position="214"/>
    </location>
</feature>
<feature type="repeat" description="LRR 5">
    <location>
        <begin position="217"/>
        <end position="238"/>
    </location>
</feature>
<feature type="repeat" description="LRR 6">
    <location>
        <begin position="241"/>
        <end position="262"/>
    </location>
</feature>
<feature type="repeat" description="LRR 7">
    <location>
        <begin position="265"/>
        <end position="286"/>
    </location>
</feature>
<feature type="repeat" description="LRR 8">
    <location>
        <begin position="289"/>
        <end position="310"/>
    </location>
</feature>
<feature type="repeat" description="LRR 9">
    <location>
        <begin position="313"/>
        <end position="334"/>
    </location>
</feature>
<feature type="repeat" description="LRR 10">
    <location>
        <begin position="337"/>
        <end position="358"/>
    </location>
</feature>
<feature type="glycosylation site" description="N-linked (GlcNAc...) asparagine" evidence="2">
    <location>
        <position position="37"/>
    </location>
</feature>
<feature type="glycosylation site" description="N-linked (GlcNAc...) asparagine" evidence="2">
    <location>
        <position position="121"/>
    </location>
</feature>
<feature type="glycosylation site" description="N-linked (GlcNAc...) asparagine" evidence="2">
    <location>
        <position position="257"/>
    </location>
</feature>
<feature type="glycosylation site" description="N-linked (GlcNAc...) asparagine" evidence="2">
    <location>
        <position position="318"/>
    </location>
</feature>
<feature type="glycosylation site" description="N-linked (GlcNAc...) asparagine" evidence="2">
    <location>
        <position position="361"/>
    </location>
</feature>
<feature type="disulfide bond" evidence="1">
    <location>
        <begin position="28"/>
        <end position="41"/>
    </location>
</feature>
<feature type="disulfide bond" evidence="1">
    <location>
        <begin position="35"/>
        <end position="54"/>
    </location>
</feature>
<feature type="disulfide bond" evidence="1">
    <location>
        <begin position="48"/>
        <end position="63"/>
    </location>
</feature>
<feature type="disulfide bond" evidence="1">
    <location>
        <begin position="478"/>
        <end position="556"/>
    </location>
</feature>
<reference key="1">
    <citation type="submission" date="2004-09" db="EMBL/GenBank/DDBJ databases">
        <authorList>
            <person name="Agoulnik A.I."/>
        </authorList>
    </citation>
    <scope>NUCLEOTIDE SEQUENCE [MRNA]</scope>
    <source>
        <strain>White shepherd</strain>
    </source>
</reference>